<name>PANB_WOLSU</name>
<proteinExistence type="inferred from homology"/>
<dbReference type="EC" id="2.1.2.11" evidence="1"/>
<dbReference type="EMBL" id="BX571661">
    <property type="protein sequence ID" value="CAE10841.1"/>
    <property type="molecule type" value="Genomic_DNA"/>
</dbReference>
<dbReference type="RefSeq" id="WP_011139624.1">
    <property type="nucleotide sequence ID" value="NC_005090.1"/>
</dbReference>
<dbReference type="SMR" id="Q7M878"/>
<dbReference type="STRING" id="273121.WS1826"/>
<dbReference type="KEGG" id="wsu:WS1826"/>
<dbReference type="eggNOG" id="COG0413">
    <property type="taxonomic scope" value="Bacteria"/>
</dbReference>
<dbReference type="HOGENOM" id="CLU_036645_1_0_7"/>
<dbReference type="UniPathway" id="UPA00028">
    <property type="reaction ID" value="UER00003"/>
</dbReference>
<dbReference type="Proteomes" id="UP000000422">
    <property type="component" value="Chromosome"/>
</dbReference>
<dbReference type="GO" id="GO:0005737">
    <property type="term" value="C:cytoplasm"/>
    <property type="evidence" value="ECO:0007669"/>
    <property type="project" value="UniProtKB-SubCell"/>
</dbReference>
<dbReference type="GO" id="GO:0003864">
    <property type="term" value="F:3-methyl-2-oxobutanoate hydroxymethyltransferase activity"/>
    <property type="evidence" value="ECO:0007669"/>
    <property type="project" value="UniProtKB-UniRule"/>
</dbReference>
<dbReference type="GO" id="GO:0000287">
    <property type="term" value="F:magnesium ion binding"/>
    <property type="evidence" value="ECO:0007669"/>
    <property type="project" value="TreeGrafter"/>
</dbReference>
<dbReference type="GO" id="GO:0015940">
    <property type="term" value="P:pantothenate biosynthetic process"/>
    <property type="evidence" value="ECO:0007669"/>
    <property type="project" value="UniProtKB-UniRule"/>
</dbReference>
<dbReference type="CDD" id="cd06557">
    <property type="entry name" value="KPHMT-like"/>
    <property type="match status" value="1"/>
</dbReference>
<dbReference type="FunFam" id="3.20.20.60:FF:000003">
    <property type="entry name" value="3-methyl-2-oxobutanoate hydroxymethyltransferase"/>
    <property type="match status" value="1"/>
</dbReference>
<dbReference type="Gene3D" id="3.20.20.60">
    <property type="entry name" value="Phosphoenolpyruvate-binding domains"/>
    <property type="match status" value="1"/>
</dbReference>
<dbReference type="HAMAP" id="MF_00156">
    <property type="entry name" value="PanB"/>
    <property type="match status" value="1"/>
</dbReference>
<dbReference type="InterPro" id="IPR003700">
    <property type="entry name" value="Pantoate_hydroxy_MeTrfase"/>
</dbReference>
<dbReference type="InterPro" id="IPR015813">
    <property type="entry name" value="Pyrv/PenolPyrv_kinase-like_dom"/>
</dbReference>
<dbReference type="InterPro" id="IPR040442">
    <property type="entry name" value="Pyrv_kinase-like_dom_sf"/>
</dbReference>
<dbReference type="NCBIfam" id="TIGR00222">
    <property type="entry name" value="panB"/>
    <property type="match status" value="1"/>
</dbReference>
<dbReference type="NCBIfam" id="NF001452">
    <property type="entry name" value="PRK00311.1"/>
    <property type="match status" value="1"/>
</dbReference>
<dbReference type="PANTHER" id="PTHR20881">
    <property type="entry name" value="3-METHYL-2-OXOBUTANOATE HYDROXYMETHYLTRANSFERASE"/>
    <property type="match status" value="1"/>
</dbReference>
<dbReference type="PANTHER" id="PTHR20881:SF0">
    <property type="entry name" value="3-METHYL-2-OXOBUTANOATE HYDROXYMETHYLTRANSFERASE"/>
    <property type="match status" value="1"/>
</dbReference>
<dbReference type="Pfam" id="PF02548">
    <property type="entry name" value="Pantoate_transf"/>
    <property type="match status" value="1"/>
</dbReference>
<dbReference type="PIRSF" id="PIRSF000388">
    <property type="entry name" value="Pantoate_hydroxy_MeTrfase"/>
    <property type="match status" value="1"/>
</dbReference>
<dbReference type="SUPFAM" id="SSF51621">
    <property type="entry name" value="Phosphoenolpyruvate/pyruvate domain"/>
    <property type="match status" value="1"/>
</dbReference>
<organism>
    <name type="scientific">Wolinella succinogenes (strain ATCC 29543 / DSM 1740 / CCUG 13145 / JCM 31913 / LMG 7466 / NCTC 11488 / FDC 602W)</name>
    <name type="common">Vibrio succinogenes</name>
    <dbReference type="NCBI Taxonomy" id="273121"/>
    <lineage>
        <taxon>Bacteria</taxon>
        <taxon>Pseudomonadati</taxon>
        <taxon>Campylobacterota</taxon>
        <taxon>Epsilonproteobacteria</taxon>
        <taxon>Campylobacterales</taxon>
        <taxon>Helicobacteraceae</taxon>
        <taxon>Wolinella</taxon>
    </lineage>
</organism>
<comment type="function">
    <text evidence="1">Catalyzes the reversible reaction in which hydroxymethyl group from 5,10-methylenetetrahydrofolate is transferred onto alpha-ketoisovalerate to form ketopantoate.</text>
</comment>
<comment type="catalytic activity">
    <reaction evidence="1">
        <text>3-methyl-2-oxobutanoate + (6R)-5,10-methylene-5,6,7,8-tetrahydrofolate + H2O = 2-dehydropantoate + (6S)-5,6,7,8-tetrahydrofolate</text>
        <dbReference type="Rhea" id="RHEA:11824"/>
        <dbReference type="ChEBI" id="CHEBI:11561"/>
        <dbReference type="ChEBI" id="CHEBI:11851"/>
        <dbReference type="ChEBI" id="CHEBI:15377"/>
        <dbReference type="ChEBI" id="CHEBI:15636"/>
        <dbReference type="ChEBI" id="CHEBI:57453"/>
        <dbReference type="EC" id="2.1.2.11"/>
    </reaction>
</comment>
<comment type="cofactor">
    <cofactor evidence="1">
        <name>Mg(2+)</name>
        <dbReference type="ChEBI" id="CHEBI:18420"/>
    </cofactor>
    <text evidence="1">Binds 1 Mg(2+) ion per subunit.</text>
</comment>
<comment type="pathway">
    <text evidence="1">Cofactor biosynthesis; (R)-pantothenate biosynthesis; (R)-pantoate from 3-methyl-2-oxobutanoate: step 1/2.</text>
</comment>
<comment type="subunit">
    <text evidence="1">Homodecamer; pentamer of dimers.</text>
</comment>
<comment type="subcellular location">
    <subcellularLocation>
        <location evidence="1">Cytoplasm</location>
    </subcellularLocation>
</comment>
<comment type="similarity">
    <text evidence="1">Belongs to the PanB family.</text>
</comment>
<sequence>MKNITVSSIKKKKNQEKITMITAYDALFARLFDGEVDILLVGDSLAMSFGGEEDTLPIGMDEMIYHTKAVCRGAEKSLVVIDMPFGSYDTKEKALHNAIRAYKESGASAVKLEGGIQKAETIALLSENGIAVMGHIGLKPQFVRAEGGYKVKGKEEGEAQSLLRDAKALEESGVFALVLEGVKAEVAQEVARSVSVPVIGIGSGSQVDGQVLVWSDMLGFFEGFTPKFVRRYLEGASLIRQGVREYAKDVREGRFPSEAESY</sequence>
<gene>
    <name evidence="1" type="primary">panB</name>
    <name type="ordered locus">WS1826</name>
</gene>
<accession>Q7M878</accession>
<evidence type="ECO:0000255" key="1">
    <source>
        <dbReference type="HAMAP-Rule" id="MF_00156"/>
    </source>
</evidence>
<reference key="1">
    <citation type="journal article" date="2003" name="Proc. Natl. Acad. Sci. U.S.A.">
        <title>Complete genome sequence and analysis of Wolinella succinogenes.</title>
        <authorList>
            <person name="Baar C."/>
            <person name="Eppinger M."/>
            <person name="Raddatz G."/>
            <person name="Simon J."/>
            <person name="Lanz C."/>
            <person name="Klimmek O."/>
            <person name="Nandakumar R."/>
            <person name="Gross R."/>
            <person name="Rosinus A."/>
            <person name="Keller H."/>
            <person name="Jagtap P."/>
            <person name="Linke B."/>
            <person name="Meyer F."/>
            <person name="Lederer H."/>
            <person name="Schuster S.C."/>
        </authorList>
    </citation>
    <scope>NUCLEOTIDE SEQUENCE [LARGE SCALE GENOMIC DNA]</scope>
    <source>
        <strain>ATCC 29543 / DSM 1740 / CCUG 13145 / JCM 31913 / LMG 7466 / NCTC 11488 / FDC 602W</strain>
    </source>
</reference>
<feature type="chain" id="PRO_0000184908" description="3-methyl-2-oxobutanoate hydroxymethyltransferase">
    <location>
        <begin position="1"/>
        <end position="262"/>
    </location>
</feature>
<feature type="active site" description="Proton acceptor" evidence="1">
    <location>
        <position position="180"/>
    </location>
</feature>
<feature type="binding site" evidence="1">
    <location>
        <begin position="43"/>
        <end position="44"/>
    </location>
    <ligand>
        <name>3-methyl-2-oxobutanoate</name>
        <dbReference type="ChEBI" id="CHEBI:11851"/>
    </ligand>
</feature>
<feature type="binding site" evidence="1">
    <location>
        <position position="43"/>
    </location>
    <ligand>
        <name>Mg(2+)</name>
        <dbReference type="ChEBI" id="CHEBI:18420"/>
    </ligand>
</feature>
<feature type="binding site" evidence="1">
    <location>
        <position position="82"/>
    </location>
    <ligand>
        <name>3-methyl-2-oxobutanoate</name>
        <dbReference type="ChEBI" id="CHEBI:11851"/>
    </ligand>
</feature>
<feature type="binding site" evidence="1">
    <location>
        <position position="82"/>
    </location>
    <ligand>
        <name>Mg(2+)</name>
        <dbReference type="ChEBI" id="CHEBI:18420"/>
    </ligand>
</feature>
<feature type="binding site" evidence="1">
    <location>
        <position position="111"/>
    </location>
    <ligand>
        <name>3-methyl-2-oxobutanoate</name>
        <dbReference type="ChEBI" id="CHEBI:11851"/>
    </ligand>
</feature>
<feature type="binding site" evidence="1">
    <location>
        <position position="113"/>
    </location>
    <ligand>
        <name>Mg(2+)</name>
        <dbReference type="ChEBI" id="CHEBI:18420"/>
    </ligand>
</feature>
<keyword id="KW-0963">Cytoplasm</keyword>
<keyword id="KW-0460">Magnesium</keyword>
<keyword id="KW-0479">Metal-binding</keyword>
<keyword id="KW-0566">Pantothenate biosynthesis</keyword>
<keyword id="KW-1185">Reference proteome</keyword>
<keyword id="KW-0808">Transferase</keyword>
<protein>
    <recommendedName>
        <fullName evidence="1">3-methyl-2-oxobutanoate hydroxymethyltransferase</fullName>
        <ecNumber evidence="1">2.1.2.11</ecNumber>
    </recommendedName>
    <alternativeName>
        <fullName evidence="1">Ketopantoate hydroxymethyltransferase</fullName>
        <shortName evidence="1">KPHMT</shortName>
    </alternativeName>
</protein>